<comment type="function">
    <text evidence="5">Core subunit of the mitochondrial membrane respiratory chain NADH dehydrogenase (Complex I) which catalyzes electron transfer from NADH through the respiratory chain, using ubiquinone as an electron acceptor. Parts of the peripheral arm of the enzyme, where the electrons from NADH are accepted by flavin mononucleotide (FMN) and then passed along a chain of iron-sulfur clusters by electron tunnelling to the final acceptor ubiquinone. Contains one iron-sulfur cluster.</text>
</comment>
<comment type="catalytic activity">
    <reaction evidence="1">
        <text>a ubiquinone + NADH + 5 H(+)(in) = a ubiquinol + NAD(+) + 4 H(+)(out)</text>
        <dbReference type="Rhea" id="RHEA:29091"/>
        <dbReference type="Rhea" id="RHEA-COMP:9565"/>
        <dbReference type="Rhea" id="RHEA-COMP:9566"/>
        <dbReference type="ChEBI" id="CHEBI:15378"/>
        <dbReference type="ChEBI" id="CHEBI:16389"/>
        <dbReference type="ChEBI" id="CHEBI:17976"/>
        <dbReference type="ChEBI" id="CHEBI:57540"/>
        <dbReference type="ChEBI" id="CHEBI:57945"/>
        <dbReference type="EC" id="7.1.1.2"/>
    </reaction>
    <physiologicalReaction direction="left-to-right" evidence="1">
        <dbReference type="Rhea" id="RHEA:29092"/>
    </physiologicalReaction>
</comment>
<comment type="cofactor">
    <cofactor evidence="1">
        <name>[2Fe-2S] cluster</name>
        <dbReference type="ChEBI" id="CHEBI:190135"/>
    </cofactor>
    <text evidence="1">Binds 1 [2Fe-2S] cluster.</text>
</comment>
<comment type="subunit">
    <text evidence="4 5">Core subunit of respiratory chain NADH dehydrogenase (Complex I) which is composed of 45 different subunits. This is a component of the flavoprotein-sulfur (FP) fragment of the enzyme.</text>
</comment>
<comment type="subcellular location">
    <subcellularLocation>
        <location evidence="5">Mitochondrion inner membrane</location>
        <topology evidence="5">Peripheral membrane protein</topology>
        <orientation evidence="5">Matrix side</orientation>
    </subcellularLocation>
</comment>
<comment type="alternative products">
    <event type="alternative splicing"/>
    <isoform>
        <id>Q9D6J6-1</id>
        <name>1</name>
        <sequence type="displayed"/>
    </isoform>
    <isoform>
        <id>Q9D6J6-2</id>
        <name>2</name>
        <sequence type="described" ref="VSP_025017"/>
    </isoform>
</comment>
<comment type="similarity">
    <text evidence="7">Belongs to the complex I 24 kDa subunit family.</text>
</comment>
<protein>
    <recommendedName>
        <fullName evidence="1">NADH dehydrogenase [ubiquinone] flavoprotein 2, mitochondrial</fullName>
        <ecNumber evidence="1">7.1.1.2</ecNumber>
    </recommendedName>
    <alternativeName>
        <fullName>NADH-ubiquinone oxidoreductase 24 kDa subunit</fullName>
    </alternativeName>
</protein>
<sequence length="248" mass="27285">MFSLALRARATGLAAQWGRHARNLHKTAVHNGAGGALFVHRDTPENNPDTPFDFTPENYKRIEAIVKNYPEGHQAAAVLPVLDLAQRQNGWLPISAMNKVAEVLQVPPMRVYEVATFYTMYNRKPVGKYHIQVCTTTPCMLRDSDSILETLQRKLGIKVGETTPDKLFTLIEVECLGACVNAPMVQINDNYYEDLTPKDIEEIIDELKAGKVPKPGPRSGRFCCEPAGGLTSLTEPPKGPGFGVQAGL</sequence>
<keyword id="KW-0001">2Fe-2S</keyword>
<keyword id="KW-0002">3D-structure</keyword>
<keyword id="KW-0007">Acetylation</keyword>
<keyword id="KW-0025">Alternative splicing</keyword>
<keyword id="KW-0903">Direct protein sequencing</keyword>
<keyword id="KW-0249">Electron transport</keyword>
<keyword id="KW-0408">Iron</keyword>
<keyword id="KW-0411">Iron-sulfur</keyword>
<keyword id="KW-0472">Membrane</keyword>
<keyword id="KW-0479">Metal-binding</keyword>
<keyword id="KW-0496">Mitochondrion</keyword>
<keyword id="KW-0999">Mitochondrion inner membrane</keyword>
<keyword id="KW-0520">NAD</keyword>
<keyword id="KW-0560">Oxidoreductase</keyword>
<keyword id="KW-0597">Phosphoprotein</keyword>
<keyword id="KW-1185">Reference proteome</keyword>
<keyword id="KW-0679">Respiratory chain</keyword>
<keyword id="KW-0809">Transit peptide</keyword>
<keyword id="KW-1278">Translocase</keyword>
<keyword id="KW-0813">Transport</keyword>
<keyword id="KW-0830">Ubiquinone</keyword>
<evidence type="ECO:0000250" key="1">
    <source>
        <dbReference type="UniProtKB" id="P19404"/>
    </source>
</evidence>
<evidence type="ECO:0000255" key="2"/>
<evidence type="ECO:0000256" key="3">
    <source>
        <dbReference type="SAM" id="MobiDB-lite"/>
    </source>
</evidence>
<evidence type="ECO:0000269" key="4">
    <source>
    </source>
</evidence>
<evidence type="ECO:0000269" key="5">
    <source>
    </source>
</evidence>
<evidence type="ECO:0000303" key="6">
    <source>
    </source>
</evidence>
<evidence type="ECO:0000305" key="7"/>
<evidence type="ECO:0000312" key="8">
    <source>
        <dbReference type="MGI" id="MGI:1920150"/>
    </source>
</evidence>
<evidence type="ECO:0007744" key="9">
    <source>
        <dbReference type="PDB" id="6G2J"/>
    </source>
</evidence>
<evidence type="ECO:0007744" key="10">
    <source>
        <dbReference type="PDB" id="6G72"/>
    </source>
</evidence>
<evidence type="ECO:0007744" key="11">
    <source>
        <dbReference type="PDB" id="8PW5"/>
    </source>
</evidence>
<evidence type="ECO:0007744" key="12">
    <source>
    </source>
</evidence>
<evidence type="ECO:0007829" key="13">
    <source>
        <dbReference type="PDB" id="6G2J"/>
    </source>
</evidence>
<evidence type="ECO:0007829" key="14">
    <source>
        <dbReference type="PDB" id="6ZTQ"/>
    </source>
</evidence>
<evidence type="ECO:0007829" key="15">
    <source>
        <dbReference type="PDB" id="7B93"/>
    </source>
</evidence>
<evidence type="ECO:0007829" key="16">
    <source>
        <dbReference type="PDB" id="8CA4"/>
    </source>
</evidence>
<evidence type="ECO:0007829" key="17">
    <source>
        <dbReference type="PDB" id="8OM1"/>
    </source>
</evidence>
<evidence type="ECO:0007829" key="18">
    <source>
        <dbReference type="PDB" id="8RGR"/>
    </source>
</evidence>
<feature type="transit peptide" description="Mitochondrion" evidence="2">
    <location>
        <begin position="1"/>
        <end position="31"/>
    </location>
</feature>
<feature type="chain" id="PRO_0000020004" description="NADH dehydrogenase [ubiquinone] flavoprotein 2, mitochondrial">
    <location>
        <begin position="32"/>
        <end position="248"/>
    </location>
</feature>
<feature type="region of interest" description="Disordered" evidence="3">
    <location>
        <begin position="229"/>
        <end position="248"/>
    </location>
</feature>
<feature type="binding site" evidence="4 9 10">
    <location>
        <position position="134"/>
    </location>
    <ligand>
        <name>[2Fe-2S] cluster</name>
        <dbReference type="ChEBI" id="CHEBI:190135"/>
    </ligand>
</feature>
<feature type="binding site" evidence="4 9 10">
    <location>
        <position position="139"/>
    </location>
    <ligand>
        <name>[2Fe-2S] cluster</name>
        <dbReference type="ChEBI" id="CHEBI:190135"/>
    </ligand>
</feature>
<feature type="binding site" evidence="4 9 10">
    <location>
        <position position="175"/>
    </location>
    <ligand>
        <name>[2Fe-2S] cluster</name>
        <dbReference type="ChEBI" id="CHEBI:190135"/>
    </ligand>
</feature>
<feature type="binding site" evidence="4 9 10">
    <location>
        <position position="179"/>
    </location>
    <ligand>
        <name>[2Fe-2S] cluster</name>
        <dbReference type="ChEBI" id="CHEBI:190135"/>
    </ligand>
</feature>
<feature type="modified residue" description="N6-acetyllysine" evidence="12">
    <location>
        <position position="60"/>
    </location>
</feature>
<feature type="modified residue" description="Phosphotyrosine; by SRC" evidence="1">
    <location>
        <position position="192"/>
    </location>
</feature>
<feature type="splice variant" id="VSP_025017" description="In isoform 2." evidence="6">
    <location>
        <begin position="1"/>
        <end position="96"/>
    </location>
</feature>
<feature type="sequence conflict" description="In Ref. 1; BAB28888." evidence="7" ref="1">
    <original>A</original>
    <variation>T</variation>
    <location>
        <position position="64"/>
    </location>
</feature>
<feature type="strand" evidence="14">
    <location>
        <begin position="44"/>
        <end position="47"/>
    </location>
</feature>
<feature type="helix" evidence="17">
    <location>
        <begin position="56"/>
        <end position="66"/>
    </location>
</feature>
<feature type="helix" evidence="17">
    <location>
        <begin position="74"/>
        <end position="77"/>
    </location>
</feature>
<feature type="helix" evidence="17">
    <location>
        <begin position="78"/>
        <end position="89"/>
    </location>
</feature>
<feature type="helix" evidence="17">
    <location>
        <begin position="94"/>
        <end position="104"/>
    </location>
</feature>
<feature type="helix" evidence="17">
    <location>
        <begin position="108"/>
        <end position="117"/>
    </location>
</feature>
<feature type="strand" evidence="15">
    <location>
        <begin position="119"/>
        <end position="121"/>
    </location>
</feature>
<feature type="strand" evidence="17">
    <location>
        <begin position="128"/>
        <end position="134"/>
    </location>
</feature>
<feature type="helix" evidence="17">
    <location>
        <begin position="137"/>
        <end position="140"/>
    </location>
</feature>
<feature type="turn" evidence="17">
    <location>
        <begin position="141"/>
        <end position="143"/>
    </location>
</feature>
<feature type="helix" evidence="17">
    <location>
        <begin position="144"/>
        <end position="155"/>
    </location>
</feature>
<feature type="strand" evidence="13">
    <location>
        <begin position="159"/>
        <end position="162"/>
    </location>
</feature>
<feature type="strand" evidence="17">
    <location>
        <begin position="166"/>
        <end position="174"/>
    </location>
</feature>
<feature type="helix" evidence="17">
    <location>
        <begin position="179"/>
        <end position="181"/>
    </location>
</feature>
<feature type="strand" evidence="17">
    <location>
        <begin position="185"/>
        <end position="187"/>
    </location>
</feature>
<feature type="strand" evidence="17">
    <location>
        <begin position="190"/>
        <end position="194"/>
    </location>
</feature>
<feature type="helix" evidence="17">
    <location>
        <begin position="197"/>
        <end position="209"/>
    </location>
</feature>
<feature type="strand" evidence="17">
    <location>
        <begin position="215"/>
        <end position="220"/>
    </location>
</feature>
<feature type="strand" evidence="17">
    <location>
        <begin position="222"/>
        <end position="225"/>
    </location>
</feature>
<feature type="strand" evidence="18">
    <location>
        <begin position="227"/>
        <end position="229"/>
    </location>
</feature>
<feature type="strand" evidence="16">
    <location>
        <begin position="231"/>
        <end position="233"/>
    </location>
</feature>
<feature type="turn" evidence="17">
    <location>
        <begin position="240"/>
        <end position="243"/>
    </location>
</feature>
<proteinExistence type="evidence at protein level"/>
<organism>
    <name type="scientific">Mus musculus</name>
    <name type="common">Mouse</name>
    <dbReference type="NCBI Taxonomy" id="10090"/>
    <lineage>
        <taxon>Eukaryota</taxon>
        <taxon>Metazoa</taxon>
        <taxon>Chordata</taxon>
        <taxon>Craniata</taxon>
        <taxon>Vertebrata</taxon>
        <taxon>Euteleostomi</taxon>
        <taxon>Mammalia</taxon>
        <taxon>Eutheria</taxon>
        <taxon>Euarchontoglires</taxon>
        <taxon>Glires</taxon>
        <taxon>Rodentia</taxon>
        <taxon>Myomorpha</taxon>
        <taxon>Muroidea</taxon>
        <taxon>Muridae</taxon>
        <taxon>Murinae</taxon>
        <taxon>Mus</taxon>
        <taxon>Mus</taxon>
    </lineage>
</organism>
<reference key="1">
    <citation type="journal article" date="2005" name="Science">
        <title>The transcriptional landscape of the mammalian genome.</title>
        <authorList>
            <person name="Carninci P."/>
            <person name="Kasukawa T."/>
            <person name="Katayama S."/>
            <person name="Gough J."/>
            <person name="Frith M.C."/>
            <person name="Maeda N."/>
            <person name="Oyama R."/>
            <person name="Ravasi T."/>
            <person name="Lenhard B."/>
            <person name="Wells C."/>
            <person name="Kodzius R."/>
            <person name="Shimokawa K."/>
            <person name="Bajic V.B."/>
            <person name="Brenner S.E."/>
            <person name="Batalov S."/>
            <person name="Forrest A.R."/>
            <person name="Zavolan M."/>
            <person name="Davis M.J."/>
            <person name="Wilming L.G."/>
            <person name="Aidinis V."/>
            <person name="Allen J.E."/>
            <person name="Ambesi-Impiombato A."/>
            <person name="Apweiler R."/>
            <person name="Aturaliya R.N."/>
            <person name="Bailey T.L."/>
            <person name="Bansal M."/>
            <person name="Baxter L."/>
            <person name="Beisel K.W."/>
            <person name="Bersano T."/>
            <person name="Bono H."/>
            <person name="Chalk A.M."/>
            <person name="Chiu K.P."/>
            <person name="Choudhary V."/>
            <person name="Christoffels A."/>
            <person name="Clutterbuck D.R."/>
            <person name="Crowe M.L."/>
            <person name="Dalla E."/>
            <person name="Dalrymple B.P."/>
            <person name="de Bono B."/>
            <person name="Della Gatta G."/>
            <person name="di Bernardo D."/>
            <person name="Down T."/>
            <person name="Engstrom P."/>
            <person name="Fagiolini M."/>
            <person name="Faulkner G."/>
            <person name="Fletcher C.F."/>
            <person name="Fukushima T."/>
            <person name="Furuno M."/>
            <person name="Futaki S."/>
            <person name="Gariboldi M."/>
            <person name="Georgii-Hemming P."/>
            <person name="Gingeras T.R."/>
            <person name="Gojobori T."/>
            <person name="Green R.E."/>
            <person name="Gustincich S."/>
            <person name="Harbers M."/>
            <person name="Hayashi Y."/>
            <person name="Hensch T.K."/>
            <person name="Hirokawa N."/>
            <person name="Hill D."/>
            <person name="Huminiecki L."/>
            <person name="Iacono M."/>
            <person name="Ikeo K."/>
            <person name="Iwama A."/>
            <person name="Ishikawa T."/>
            <person name="Jakt M."/>
            <person name="Kanapin A."/>
            <person name="Katoh M."/>
            <person name="Kawasawa Y."/>
            <person name="Kelso J."/>
            <person name="Kitamura H."/>
            <person name="Kitano H."/>
            <person name="Kollias G."/>
            <person name="Krishnan S.P."/>
            <person name="Kruger A."/>
            <person name="Kummerfeld S.K."/>
            <person name="Kurochkin I.V."/>
            <person name="Lareau L.F."/>
            <person name="Lazarevic D."/>
            <person name="Lipovich L."/>
            <person name="Liu J."/>
            <person name="Liuni S."/>
            <person name="McWilliam S."/>
            <person name="Madan Babu M."/>
            <person name="Madera M."/>
            <person name="Marchionni L."/>
            <person name="Matsuda H."/>
            <person name="Matsuzawa S."/>
            <person name="Miki H."/>
            <person name="Mignone F."/>
            <person name="Miyake S."/>
            <person name="Morris K."/>
            <person name="Mottagui-Tabar S."/>
            <person name="Mulder N."/>
            <person name="Nakano N."/>
            <person name="Nakauchi H."/>
            <person name="Ng P."/>
            <person name="Nilsson R."/>
            <person name="Nishiguchi S."/>
            <person name="Nishikawa S."/>
            <person name="Nori F."/>
            <person name="Ohara O."/>
            <person name="Okazaki Y."/>
            <person name="Orlando V."/>
            <person name="Pang K.C."/>
            <person name="Pavan W.J."/>
            <person name="Pavesi G."/>
            <person name="Pesole G."/>
            <person name="Petrovsky N."/>
            <person name="Piazza S."/>
            <person name="Reed J."/>
            <person name="Reid J.F."/>
            <person name="Ring B.Z."/>
            <person name="Ringwald M."/>
            <person name="Rost B."/>
            <person name="Ruan Y."/>
            <person name="Salzberg S.L."/>
            <person name="Sandelin A."/>
            <person name="Schneider C."/>
            <person name="Schoenbach C."/>
            <person name="Sekiguchi K."/>
            <person name="Semple C.A."/>
            <person name="Seno S."/>
            <person name="Sessa L."/>
            <person name="Sheng Y."/>
            <person name="Shibata Y."/>
            <person name="Shimada H."/>
            <person name="Shimada K."/>
            <person name="Silva D."/>
            <person name="Sinclair B."/>
            <person name="Sperling S."/>
            <person name="Stupka E."/>
            <person name="Sugiura K."/>
            <person name="Sultana R."/>
            <person name="Takenaka Y."/>
            <person name="Taki K."/>
            <person name="Tammoja K."/>
            <person name="Tan S.L."/>
            <person name="Tang S."/>
            <person name="Taylor M.S."/>
            <person name="Tegner J."/>
            <person name="Teichmann S.A."/>
            <person name="Ueda H.R."/>
            <person name="van Nimwegen E."/>
            <person name="Verardo R."/>
            <person name="Wei C.L."/>
            <person name="Yagi K."/>
            <person name="Yamanishi H."/>
            <person name="Zabarovsky E."/>
            <person name="Zhu S."/>
            <person name="Zimmer A."/>
            <person name="Hide W."/>
            <person name="Bult C."/>
            <person name="Grimmond S.M."/>
            <person name="Teasdale R.D."/>
            <person name="Liu E.T."/>
            <person name="Brusic V."/>
            <person name="Quackenbush J."/>
            <person name="Wahlestedt C."/>
            <person name="Mattick J.S."/>
            <person name="Hume D.A."/>
            <person name="Kai C."/>
            <person name="Sasaki D."/>
            <person name="Tomaru Y."/>
            <person name="Fukuda S."/>
            <person name="Kanamori-Katayama M."/>
            <person name="Suzuki M."/>
            <person name="Aoki J."/>
            <person name="Arakawa T."/>
            <person name="Iida J."/>
            <person name="Imamura K."/>
            <person name="Itoh M."/>
            <person name="Kato T."/>
            <person name="Kawaji H."/>
            <person name="Kawagashira N."/>
            <person name="Kawashima T."/>
            <person name="Kojima M."/>
            <person name="Kondo S."/>
            <person name="Konno H."/>
            <person name="Nakano K."/>
            <person name="Ninomiya N."/>
            <person name="Nishio T."/>
            <person name="Okada M."/>
            <person name="Plessy C."/>
            <person name="Shibata K."/>
            <person name="Shiraki T."/>
            <person name="Suzuki S."/>
            <person name="Tagami M."/>
            <person name="Waki K."/>
            <person name="Watahiki A."/>
            <person name="Okamura-Oho Y."/>
            <person name="Suzuki H."/>
            <person name="Kawai J."/>
            <person name="Hayashizaki Y."/>
        </authorList>
    </citation>
    <scope>NUCLEOTIDE SEQUENCE [LARGE SCALE MRNA] (ISOFORMS 1 AND 2)</scope>
    <source>
        <strain>C57BL/6J</strain>
        <strain>NOD</strain>
        <tissue>Bone marrow</tissue>
        <tissue>Cerebellum</tissue>
        <tissue>Heart</tissue>
        <tissue>Hippocampus</tissue>
        <tissue>Thymus</tissue>
    </source>
</reference>
<reference key="2">
    <citation type="journal article" date="2004" name="Genome Res.">
        <title>The status, quality, and expansion of the NIH full-length cDNA project: the Mammalian Gene Collection (MGC).</title>
        <authorList>
            <consortium name="The MGC Project Team"/>
        </authorList>
    </citation>
    <scope>NUCLEOTIDE SEQUENCE [LARGE SCALE MRNA] (ISOFORM 1)</scope>
    <source>
        <strain>FVB/N-3</strain>
        <tissue>Mammary tumor</tissue>
    </source>
</reference>
<reference key="3">
    <citation type="submission" date="2007-04" db="UniProtKB">
        <authorList>
            <person name="Lubec G."/>
            <person name="Klug S."/>
            <person name="Kang S.U."/>
        </authorList>
    </citation>
    <scope>PROTEIN SEQUENCE OF 42-61; 68-123; 129-153 AND 199-208</scope>
    <scope>IDENTIFICATION BY MASS SPECTROMETRY</scope>
    <source>
        <strain>C57BL/6J</strain>
        <tissue>Brain</tissue>
        <tissue>Hippocampus</tissue>
    </source>
</reference>
<reference key="4">
    <citation type="journal article" date="2010" name="Cell">
        <title>A tissue-specific atlas of mouse protein phosphorylation and expression.</title>
        <authorList>
            <person name="Huttlin E.L."/>
            <person name="Jedrychowski M.P."/>
            <person name="Elias J.E."/>
            <person name="Goswami T."/>
            <person name="Rad R."/>
            <person name="Beausoleil S.A."/>
            <person name="Villen J."/>
            <person name="Haas W."/>
            <person name="Sowa M.E."/>
            <person name="Gygi S.P."/>
        </authorList>
    </citation>
    <scope>IDENTIFICATION BY MASS SPECTROMETRY [LARGE SCALE ANALYSIS]</scope>
    <source>
        <tissue>Brain</tissue>
        <tissue>Brown adipose tissue</tissue>
        <tissue>Heart</tissue>
        <tissue>Kidney</tissue>
        <tissue>Liver</tissue>
        <tissue>Lung</tissue>
        <tissue>Pancreas</tissue>
        <tissue>Spleen</tissue>
        <tissue>Testis</tissue>
    </source>
</reference>
<reference key="5">
    <citation type="journal article" date="2013" name="Proc. Natl. Acad. Sci. U.S.A.">
        <title>Label-free quantitative proteomics of the lysine acetylome in mitochondria identifies substrates of SIRT3 in metabolic pathways.</title>
        <authorList>
            <person name="Rardin M.J."/>
            <person name="Newman J.C."/>
            <person name="Held J.M."/>
            <person name="Cusack M.P."/>
            <person name="Sorensen D.J."/>
            <person name="Li B."/>
            <person name="Schilling B."/>
            <person name="Mooney S.D."/>
            <person name="Kahn C.R."/>
            <person name="Verdin E."/>
            <person name="Gibson B.W."/>
        </authorList>
    </citation>
    <scope>ACETYLATION [LARGE SCALE ANALYSIS] AT LYS-60</scope>
    <scope>IDENTIFICATION BY MASS SPECTROMETRY [LARGE SCALE ANALYSIS]</scope>
    <source>
        <tissue>Liver</tissue>
    </source>
</reference>
<reference evidence="9 10" key="6">
    <citation type="journal article" date="2018" name="Nat. Struct. Mol. Biol.">
        <title>Cryo-EM structures of complex I from mouse heart mitochondria in two biochemically defined states.</title>
        <authorList>
            <person name="Agip A.A."/>
            <person name="Blaza J.N."/>
            <person name="Bridges H.R."/>
            <person name="Viscomi C."/>
            <person name="Rawson S."/>
            <person name="Muench S.P."/>
            <person name="Hirst J."/>
        </authorList>
    </citation>
    <scope>STRUCTURE BY ELECTRON MICROSCOPY (3.30 ANGSTROMS)</scope>
    <scope>FUNCTION</scope>
    <scope>CATALYTIC ACTIVITY</scope>
    <scope>COFACTOR</scope>
    <scope>SUBUNIT</scope>
</reference>
<reference evidence="11" key="7">
    <citation type="journal article" date="2024" name="Nat. Struct. Mol. Biol.">
        <title>SCAF1 drives the compositional diversity of mammalian respirasomes.</title>
        <authorList>
            <person name="Vercellino I."/>
            <person name="Sazanov L.A."/>
        </authorList>
    </citation>
    <scope>STRUCTURE BY ELECTRON MICROSCOPY (3.60 ANGSTROMS) IN COMPLEX WITH MITOCHONDRIAL RESPIRATORY SUPERCOMPLEX</scope>
    <scope>FUNCTION</scope>
    <scope>SUBCELLULAR LOCATION</scope>
    <scope>SUBUNIT</scope>
</reference>
<dbReference type="EC" id="7.1.1.2" evidence="1"/>
<dbReference type="EMBL" id="AK013511">
    <property type="protein sequence ID" value="BAB28888.1"/>
    <property type="molecule type" value="mRNA"/>
</dbReference>
<dbReference type="EMBL" id="AK078351">
    <property type="protein sequence ID" value="BAC37233.1"/>
    <property type="molecule type" value="mRNA"/>
</dbReference>
<dbReference type="EMBL" id="AK088193">
    <property type="protein sequence ID" value="BAC40201.1"/>
    <property type="molecule type" value="mRNA"/>
</dbReference>
<dbReference type="EMBL" id="AK146998">
    <property type="protein sequence ID" value="BAE27595.1"/>
    <property type="molecule type" value="mRNA"/>
</dbReference>
<dbReference type="EMBL" id="AK150404">
    <property type="protein sequence ID" value="BAE29530.1"/>
    <property type="molecule type" value="mRNA"/>
</dbReference>
<dbReference type="EMBL" id="AK151729">
    <property type="protein sequence ID" value="BAE30647.1"/>
    <property type="molecule type" value="mRNA"/>
</dbReference>
<dbReference type="EMBL" id="AK159460">
    <property type="protein sequence ID" value="BAE35102.1"/>
    <property type="molecule type" value="mRNA"/>
</dbReference>
<dbReference type="EMBL" id="AK166539">
    <property type="protein sequence ID" value="BAE38841.1"/>
    <property type="molecule type" value="mRNA"/>
</dbReference>
<dbReference type="EMBL" id="AK169143">
    <property type="protein sequence ID" value="BAE40922.1"/>
    <property type="molecule type" value="mRNA"/>
</dbReference>
<dbReference type="EMBL" id="BC030946">
    <property type="protein sequence ID" value="AAH30946.1"/>
    <property type="molecule type" value="mRNA"/>
</dbReference>
<dbReference type="CCDS" id="CCDS37679.1">
    <molecule id="Q9D6J6-1"/>
</dbReference>
<dbReference type="CCDS" id="CCDS70836.1">
    <molecule id="Q9D6J6-2"/>
</dbReference>
<dbReference type="RefSeq" id="NP_001265344.1">
    <molecule id="Q9D6J6-2"/>
    <property type="nucleotide sequence ID" value="NM_001278415.1"/>
</dbReference>
<dbReference type="RefSeq" id="NP_082664.1">
    <molecule id="Q9D6J6-1"/>
    <property type="nucleotide sequence ID" value="NM_028388.3"/>
</dbReference>
<dbReference type="PDB" id="6G2J">
    <property type="method" value="EM"/>
    <property type="resolution" value="3.30 A"/>
    <property type="chains" value="E=1-248"/>
</dbReference>
<dbReference type="PDB" id="6G72">
    <property type="method" value="EM"/>
    <property type="resolution" value="3.90 A"/>
    <property type="chains" value="E=1-248"/>
</dbReference>
<dbReference type="PDB" id="6ZR2">
    <property type="method" value="EM"/>
    <property type="resolution" value="3.10 A"/>
    <property type="chains" value="E=1-248"/>
</dbReference>
<dbReference type="PDB" id="6ZTQ">
    <property type="method" value="EM"/>
    <property type="resolution" value="3.00 A"/>
    <property type="chains" value="E=1-248"/>
</dbReference>
<dbReference type="PDB" id="7AK5">
    <property type="method" value="EM"/>
    <property type="resolution" value="3.17 A"/>
    <property type="chains" value="E=1-245"/>
</dbReference>
<dbReference type="PDB" id="7AK6">
    <property type="method" value="EM"/>
    <property type="resolution" value="3.82 A"/>
    <property type="chains" value="E=1-248"/>
</dbReference>
<dbReference type="PDB" id="7B93">
    <property type="method" value="EM"/>
    <property type="resolution" value="3.04 A"/>
    <property type="chains" value="E=1-248"/>
</dbReference>
<dbReference type="PDB" id="7PSA">
    <property type="method" value="EM"/>
    <property type="resolution" value="3.40 A"/>
    <property type="chains" value="E=1-248"/>
</dbReference>
<dbReference type="PDB" id="8C2S">
    <property type="method" value="EM"/>
    <property type="resolution" value="3.90 A"/>
    <property type="chains" value="E=1-245"/>
</dbReference>
<dbReference type="PDB" id="8CA3">
    <property type="method" value="EM"/>
    <property type="resolution" value="3.20 A"/>
    <property type="chains" value="E=1-245"/>
</dbReference>
<dbReference type="PDB" id="8CA4">
    <property type="method" value="EM"/>
    <property type="resolution" value="3.25 A"/>
    <property type="chains" value="E=1-248"/>
</dbReference>
<dbReference type="PDB" id="8CA5">
    <property type="method" value="EM"/>
    <property type="resolution" value="3.90 A"/>
    <property type="chains" value="E=1-248"/>
</dbReference>
<dbReference type="PDB" id="8IAO">
    <property type="method" value="EM"/>
    <property type="resolution" value="4.20 A"/>
    <property type="chains" value="E=1-248"/>
</dbReference>
<dbReference type="PDB" id="8IAP">
    <property type="method" value="EM"/>
    <property type="resolution" value="3.20 A"/>
    <property type="chains" value="E=1-248"/>
</dbReference>
<dbReference type="PDB" id="8IB4">
    <property type="method" value="EM"/>
    <property type="resolution" value="4.30 A"/>
    <property type="chains" value="E=1-248"/>
</dbReference>
<dbReference type="PDB" id="8IB5">
    <property type="method" value="EM"/>
    <property type="resolution" value="3.30 A"/>
    <property type="chains" value="E=1-248"/>
</dbReference>
<dbReference type="PDB" id="8IB9">
    <property type="method" value="EM"/>
    <property type="resolution" value="4.30 A"/>
    <property type="chains" value="E=1-248"/>
</dbReference>
<dbReference type="PDB" id="8IBA">
    <property type="method" value="EM"/>
    <property type="resolution" value="3.20 A"/>
    <property type="chains" value="E=1-248"/>
</dbReference>
<dbReference type="PDB" id="8IBD">
    <property type="method" value="EM"/>
    <property type="resolution" value="4.20 A"/>
    <property type="chains" value="E=1-248"/>
</dbReference>
<dbReference type="PDB" id="8IBE">
    <property type="method" value="EM"/>
    <property type="resolution" value="3.30 A"/>
    <property type="chains" value="E=1-248"/>
</dbReference>
<dbReference type="PDB" id="8IC2">
    <property type="method" value="EM"/>
    <property type="resolution" value="6.30 A"/>
    <property type="chains" value="E=1-248"/>
</dbReference>
<dbReference type="PDB" id="8IC3">
    <property type="method" value="EM"/>
    <property type="resolution" value="3.20 A"/>
    <property type="chains" value="E=1-248"/>
</dbReference>
<dbReference type="PDB" id="8OLT">
    <property type="method" value="EM"/>
    <property type="resolution" value="2.84 A"/>
    <property type="chains" value="E=1-248"/>
</dbReference>
<dbReference type="PDB" id="8OM1">
    <property type="method" value="EM"/>
    <property type="resolution" value="2.39 A"/>
    <property type="chains" value="E=1-248"/>
</dbReference>
<dbReference type="PDB" id="8PW5">
    <property type="method" value="EM"/>
    <property type="resolution" value="3.60 A"/>
    <property type="chains" value="2=1-248"/>
</dbReference>
<dbReference type="PDB" id="8PW6">
    <property type="method" value="EM"/>
    <property type="resolution" value="3.30 A"/>
    <property type="chains" value="2=1-248"/>
</dbReference>
<dbReference type="PDB" id="8PW7">
    <property type="method" value="EM"/>
    <property type="resolution" value="3.50 A"/>
    <property type="chains" value="2=1-248"/>
</dbReference>
<dbReference type="PDB" id="8RGP">
    <property type="method" value="EM"/>
    <property type="resolution" value="3.00 A"/>
    <property type="chains" value="2=1-248"/>
</dbReference>
<dbReference type="PDB" id="8RGQ">
    <property type="method" value="EM"/>
    <property type="resolution" value="3.00 A"/>
    <property type="chains" value="2=1-248"/>
</dbReference>
<dbReference type="PDB" id="8RGR">
    <property type="method" value="EM"/>
    <property type="resolution" value="2.90 A"/>
    <property type="chains" value="2=1-248"/>
</dbReference>
<dbReference type="PDB" id="8RGT">
    <property type="method" value="EM"/>
    <property type="resolution" value="3.10 A"/>
    <property type="chains" value="2=1-248"/>
</dbReference>
<dbReference type="PDB" id="8UCA">
    <property type="method" value="EM"/>
    <property type="resolution" value="3.70 A"/>
    <property type="chains" value="V2/v2=1-244"/>
</dbReference>
<dbReference type="PDB" id="8XNL">
    <property type="method" value="EM"/>
    <property type="resolution" value="3.10 A"/>
    <property type="chains" value="E=1-248"/>
</dbReference>
<dbReference type="PDB" id="8XNM">
    <property type="method" value="EM"/>
    <property type="resolution" value="3.50 A"/>
    <property type="chains" value="E=1-248"/>
</dbReference>
<dbReference type="PDB" id="8XNN">
    <property type="method" value="EM"/>
    <property type="resolution" value="3.60 A"/>
    <property type="chains" value="E=1-248"/>
</dbReference>
<dbReference type="PDB" id="8XNO">
    <property type="method" value="EM"/>
    <property type="resolution" value="3.40 A"/>
    <property type="chains" value="E=1-248"/>
</dbReference>
<dbReference type="PDB" id="8XNP">
    <property type="method" value="EM"/>
    <property type="resolution" value="3.50 A"/>
    <property type="chains" value="E=1-248"/>
</dbReference>
<dbReference type="PDB" id="8XNQ">
    <property type="method" value="EM"/>
    <property type="resolution" value="3.70 A"/>
    <property type="chains" value="E=1-248"/>
</dbReference>
<dbReference type="PDB" id="8XNR">
    <property type="method" value="EM"/>
    <property type="resolution" value="3.30 A"/>
    <property type="chains" value="E=1-248"/>
</dbReference>
<dbReference type="PDB" id="8XNS">
    <property type="method" value="EM"/>
    <property type="resolution" value="3.50 A"/>
    <property type="chains" value="E=1-248"/>
</dbReference>
<dbReference type="PDB" id="8XNT">
    <property type="method" value="EM"/>
    <property type="resolution" value="4.10 A"/>
    <property type="chains" value="E=1-248"/>
</dbReference>
<dbReference type="PDB" id="8XNU">
    <property type="method" value="EM"/>
    <property type="resolution" value="3.60 A"/>
    <property type="chains" value="E=1-248"/>
</dbReference>
<dbReference type="PDB" id="8XNV">
    <property type="method" value="EM"/>
    <property type="resolution" value="3.30 A"/>
    <property type="chains" value="E=1-248"/>
</dbReference>
<dbReference type="PDB" id="8XNW">
    <property type="method" value="EM"/>
    <property type="resolution" value="3.60 A"/>
    <property type="chains" value="E=1-248"/>
</dbReference>
<dbReference type="PDB" id="8XNX">
    <property type="method" value="EM"/>
    <property type="resolution" value="3.50 A"/>
    <property type="chains" value="E=1-248"/>
</dbReference>
<dbReference type="PDB" id="8XNY">
    <property type="method" value="EM"/>
    <property type="resolution" value="4.10 A"/>
    <property type="chains" value="E=1-248"/>
</dbReference>
<dbReference type="PDB" id="8XNZ">
    <property type="method" value="EM"/>
    <property type="resolution" value="3.30 A"/>
    <property type="chains" value="E=1-248"/>
</dbReference>
<dbReference type="PDB" id="8XO0">
    <property type="method" value="EM"/>
    <property type="resolution" value="4.20 A"/>
    <property type="chains" value="E=1-248"/>
</dbReference>
<dbReference type="PDBsum" id="6G2J"/>
<dbReference type="PDBsum" id="6G72"/>
<dbReference type="PDBsum" id="6ZR2"/>
<dbReference type="PDBsum" id="6ZTQ"/>
<dbReference type="PDBsum" id="7AK5"/>
<dbReference type="PDBsum" id="7AK6"/>
<dbReference type="PDBsum" id="7B93"/>
<dbReference type="PDBsum" id="7PSA"/>
<dbReference type="PDBsum" id="8C2S"/>
<dbReference type="PDBsum" id="8CA3"/>
<dbReference type="PDBsum" id="8CA4"/>
<dbReference type="PDBsum" id="8CA5"/>
<dbReference type="PDBsum" id="8IAO"/>
<dbReference type="PDBsum" id="8IAP"/>
<dbReference type="PDBsum" id="8IB4"/>
<dbReference type="PDBsum" id="8IB5"/>
<dbReference type="PDBsum" id="8IB9"/>
<dbReference type="PDBsum" id="8IBA"/>
<dbReference type="PDBsum" id="8IBD"/>
<dbReference type="PDBsum" id="8IBE"/>
<dbReference type="PDBsum" id="8IC2"/>
<dbReference type="PDBsum" id="8IC3"/>
<dbReference type="PDBsum" id="8OLT"/>
<dbReference type="PDBsum" id="8OM1"/>
<dbReference type="PDBsum" id="8PW5"/>
<dbReference type="PDBsum" id="8PW6"/>
<dbReference type="PDBsum" id="8PW7"/>
<dbReference type="PDBsum" id="8RGP"/>
<dbReference type="PDBsum" id="8RGQ"/>
<dbReference type="PDBsum" id="8RGR"/>
<dbReference type="PDBsum" id="8RGT"/>
<dbReference type="PDBsum" id="8UCA"/>
<dbReference type="PDBsum" id="8XNL"/>
<dbReference type="PDBsum" id="8XNM"/>
<dbReference type="PDBsum" id="8XNN"/>
<dbReference type="PDBsum" id="8XNO"/>
<dbReference type="PDBsum" id="8XNP"/>
<dbReference type="PDBsum" id="8XNQ"/>
<dbReference type="PDBsum" id="8XNR"/>
<dbReference type="PDBsum" id="8XNS"/>
<dbReference type="PDBsum" id="8XNT"/>
<dbReference type="PDBsum" id="8XNU"/>
<dbReference type="PDBsum" id="8XNV"/>
<dbReference type="PDBsum" id="8XNW"/>
<dbReference type="PDBsum" id="8XNX"/>
<dbReference type="PDBsum" id="8XNY"/>
<dbReference type="PDBsum" id="8XNZ"/>
<dbReference type="PDBsum" id="8XO0"/>
<dbReference type="EMDB" id="EMD-16398"/>
<dbReference type="EMDB" id="EMD-16516"/>
<dbReference type="EMDB" id="EMD-16517"/>
<dbReference type="EMDB" id="EMD-16518"/>
<dbReference type="EMDB" id="EMD-16962"/>
<dbReference type="EMDB" id="EMD-16965"/>
<dbReference type="EMDB" id="EMD-17989"/>
<dbReference type="EMDB" id="EMD-17990"/>
<dbReference type="EMDB" id="EMD-17991"/>
<dbReference type="EMDB" id="EMD-19145"/>
<dbReference type="EMDB" id="EMD-19146"/>
<dbReference type="EMDB" id="EMD-19147"/>
<dbReference type="EMDB" id="EMD-19148"/>
<dbReference type="EMDB" id="EMD-35313"/>
<dbReference type="EMDB" id="EMD-35314"/>
<dbReference type="EMDB" id="EMD-35331"/>
<dbReference type="EMDB" id="EMD-35332"/>
<dbReference type="EMDB" id="EMD-35336"/>
<dbReference type="EMDB" id="EMD-35337"/>
<dbReference type="EMDB" id="EMD-35340"/>
<dbReference type="EMDB" id="EMD-35341"/>
<dbReference type="EMDB" id="EMD-35352"/>
<dbReference type="EMDB" id="EMD-35353"/>
<dbReference type="EMDB" id="EMD-38506"/>
<dbReference type="EMDB" id="EMD-38507"/>
<dbReference type="EMDB" id="EMD-38508"/>
<dbReference type="EMDB" id="EMD-38509"/>
<dbReference type="EMDB" id="EMD-38510"/>
<dbReference type="EMDB" id="EMD-38511"/>
<dbReference type="EMDB" id="EMD-38512"/>
<dbReference type="EMDB" id="EMD-38513"/>
<dbReference type="EMDB" id="EMD-38514"/>
<dbReference type="EMDB" id="EMD-38515"/>
<dbReference type="EMDB" id="EMD-38516"/>
<dbReference type="EMDB" id="EMD-38517"/>
<dbReference type="EMDB" id="EMD-38518"/>
<dbReference type="EMDB" id="EMD-38519"/>
<dbReference type="EMDB" id="EMD-38520"/>
<dbReference type="EMDB" id="EMD-38521"/>
<dbReference type="EMDB" id="EMD-42122"/>
<dbReference type="EMDB" id="EMD-4356"/>
<dbReference type="SMR" id="Q9D6J6"/>
<dbReference type="BioGRID" id="215635">
    <property type="interactions" value="79"/>
</dbReference>
<dbReference type="ComplexPortal" id="CPX-266">
    <property type="entry name" value="Mitochondrial respiratory chain complex I"/>
</dbReference>
<dbReference type="CORUM" id="Q9D6J6"/>
<dbReference type="FunCoup" id="Q9D6J6">
    <property type="interactions" value="1942"/>
</dbReference>
<dbReference type="IntAct" id="Q9D6J6">
    <property type="interactions" value="6"/>
</dbReference>
<dbReference type="MINT" id="Q9D6J6"/>
<dbReference type="STRING" id="10090.ENSMUSP00000121557"/>
<dbReference type="GlyGen" id="Q9D6J6">
    <property type="glycosylation" value="1 site, 1 O-linked glycan (1 site)"/>
</dbReference>
<dbReference type="iPTMnet" id="Q9D6J6"/>
<dbReference type="PhosphoSitePlus" id="Q9D6J6"/>
<dbReference type="SwissPalm" id="Q9D6J6"/>
<dbReference type="REPRODUCTION-2DPAGE" id="Q9D6J6"/>
<dbReference type="jPOST" id="Q9D6J6"/>
<dbReference type="PaxDb" id="10090-ENSMUSP00000121557"/>
<dbReference type="PeptideAtlas" id="Q9D6J6"/>
<dbReference type="ProteomicsDB" id="293649">
    <molecule id="Q9D6J6-1"/>
</dbReference>
<dbReference type="ProteomicsDB" id="293650">
    <molecule id="Q9D6J6-2"/>
</dbReference>
<dbReference type="Pumba" id="Q9D6J6"/>
<dbReference type="Antibodypedia" id="1273">
    <property type="antibodies" value="281 antibodies from 33 providers"/>
</dbReference>
<dbReference type="Ensembl" id="ENSMUST00000024909.15">
    <molecule id="Q9D6J6-2"/>
    <property type="protein sequence ID" value="ENSMUSP00000024909.10"/>
    <property type="gene ID" value="ENSMUSG00000024099.16"/>
</dbReference>
<dbReference type="Ensembl" id="ENSMUST00000143987.9">
    <molecule id="Q9D6J6-1"/>
    <property type="protein sequence ID" value="ENSMUSP00000121557.2"/>
    <property type="gene ID" value="ENSMUSG00000024099.16"/>
</dbReference>
<dbReference type="GeneID" id="72900"/>
<dbReference type="KEGG" id="mmu:72900"/>
<dbReference type="UCSC" id="uc008dgw.2">
    <molecule id="Q9D6J6-1"/>
    <property type="organism name" value="mouse"/>
</dbReference>
<dbReference type="AGR" id="MGI:1920150"/>
<dbReference type="CTD" id="4729"/>
<dbReference type="MGI" id="MGI:1920150">
    <property type="gene designation" value="Ndufv2"/>
</dbReference>
<dbReference type="VEuPathDB" id="HostDB:ENSMUSG00000024099"/>
<dbReference type="eggNOG" id="KOG3196">
    <property type="taxonomic scope" value="Eukaryota"/>
</dbReference>
<dbReference type="GeneTree" id="ENSGT00390000017580"/>
<dbReference type="HOGENOM" id="CLU_054362_1_1_1"/>
<dbReference type="InParanoid" id="Q9D6J6"/>
<dbReference type="OMA" id="IMSIYPE"/>
<dbReference type="OrthoDB" id="10254187at2759"/>
<dbReference type="PhylomeDB" id="Q9D6J6"/>
<dbReference type="TreeFam" id="TF300004"/>
<dbReference type="Reactome" id="R-MMU-611105">
    <property type="pathway name" value="Respiratory electron transport"/>
</dbReference>
<dbReference type="Reactome" id="R-MMU-6799198">
    <property type="pathway name" value="Complex I biogenesis"/>
</dbReference>
<dbReference type="BioGRID-ORCS" id="72900">
    <property type="hits" value="24 hits in 80 CRISPR screens"/>
</dbReference>
<dbReference type="CD-CODE" id="CE726F99">
    <property type="entry name" value="Postsynaptic density"/>
</dbReference>
<dbReference type="ChiTaRS" id="Ndufv2">
    <property type="organism name" value="mouse"/>
</dbReference>
<dbReference type="PRO" id="PR:Q9D6J6"/>
<dbReference type="Proteomes" id="UP000000589">
    <property type="component" value="Chromosome 17"/>
</dbReference>
<dbReference type="RNAct" id="Q9D6J6">
    <property type="molecule type" value="protein"/>
</dbReference>
<dbReference type="Bgee" id="ENSMUSG00000024099">
    <property type="expression patterns" value="Expressed in interventricular septum and 270 other cell types or tissues"/>
</dbReference>
<dbReference type="ExpressionAtlas" id="Q9D6J6">
    <property type="expression patterns" value="baseline and differential"/>
</dbReference>
<dbReference type="GO" id="GO:0005743">
    <property type="term" value="C:mitochondrial inner membrane"/>
    <property type="evidence" value="ECO:0000314"/>
    <property type="project" value="UniProtKB"/>
</dbReference>
<dbReference type="GO" id="GO:0005739">
    <property type="term" value="C:mitochondrion"/>
    <property type="evidence" value="ECO:0000314"/>
    <property type="project" value="MGI"/>
</dbReference>
<dbReference type="GO" id="GO:0043209">
    <property type="term" value="C:myelin sheath"/>
    <property type="evidence" value="ECO:0007005"/>
    <property type="project" value="UniProtKB"/>
</dbReference>
<dbReference type="GO" id="GO:0045271">
    <property type="term" value="C:respiratory chain complex I"/>
    <property type="evidence" value="ECO:0000314"/>
    <property type="project" value="UniProtKB"/>
</dbReference>
<dbReference type="GO" id="GO:0051537">
    <property type="term" value="F:2 iron, 2 sulfur cluster binding"/>
    <property type="evidence" value="ECO:0007669"/>
    <property type="project" value="UniProtKB-KW"/>
</dbReference>
<dbReference type="GO" id="GO:0046872">
    <property type="term" value="F:metal ion binding"/>
    <property type="evidence" value="ECO:0007669"/>
    <property type="project" value="UniProtKB-KW"/>
</dbReference>
<dbReference type="GO" id="GO:0008137">
    <property type="term" value="F:NADH dehydrogenase (ubiquinone) activity"/>
    <property type="evidence" value="ECO:0000314"/>
    <property type="project" value="UniProtKB"/>
</dbReference>
<dbReference type="GO" id="GO:0009060">
    <property type="term" value="P:aerobic respiration"/>
    <property type="evidence" value="ECO:0000303"/>
    <property type="project" value="ComplexPortal"/>
</dbReference>
<dbReference type="GO" id="GO:0048738">
    <property type="term" value="P:cardiac muscle tissue development"/>
    <property type="evidence" value="ECO:0007669"/>
    <property type="project" value="Ensembl"/>
</dbReference>
<dbReference type="GO" id="GO:0006120">
    <property type="term" value="P:mitochondrial electron transport, NADH to ubiquinone"/>
    <property type="evidence" value="ECO:0000314"/>
    <property type="project" value="UniProtKB"/>
</dbReference>
<dbReference type="GO" id="GO:0007399">
    <property type="term" value="P:nervous system development"/>
    <property type="evidence" value="ECO:0007669"/>
    <property type="project" value="Ensembl"/>
</dbReference>
<dbReference type="GO" id="GO:0042776">
    <property type="term" value="P:proton motive force-driven mitochondrial ATP synthesis"/>
    <property type="evidence" value="ECO:0000303"/>
    <property type="project" value="ComplexPortal"/>
</dbReference>
<dbReference type="CDD" id="cd03064">
    <property type="entry name" value="TRX_Fd_NuoE"/>
    <property type="match status" value="1"/>
</dbReference>
<dbReference type="FunFam" id="3.40.30.10:FF:000022">
    <property type="entry name" value="NADH dehydrogenase flavoprotein 2, mitochondrial"/>
    <property type="match status" value="1"/>
</dbReference>
<dbReference type="FunFam" id="1.10.10.1590:FF:000001">
    <property type="entry name" value="NADH-quinone oxidoreductase subunit E"/>
    <property type="match status" value="1"/>
</dbReference>
<dbReference type="Gene3D" id="3.40.30.10">
    <property type="entry name" value="Glutaredoxin"/>
    <property type="match status" value="1"/>
</dbReference>
<dbReference type="Gene3D" id="1.10.10.1590">
    <property type="entry name" value="NADH-quinone oxidoreductase subunit E"/>
    <property type="match status" value="1"/>
</dbReference>
<dbReference type="InterPro" id="IPR002023">
    <property type="entry name" value="NuoE-like"/>
</dbReference>
<dbReference type="InterPro" id="IPR042128">
    <property type="entry name" value="NuoE_dom"/>
</dbReference>
<dbReference type="InterPro" id="IPR041921">
    <property type="entry name" value="NuoE_N"/>
</dbReference>
<dbReference type="InterPro" id="IPR036249">
    <property type="entry name" value="Thioredoxin-like_sf"/>
</dbReference>
<dbReference type="NCBIfam" id="TIGR01958">
    <property type="entry name" value="nuoE_fam"/>
    <property type="match status" value="1"/>
</dbReference>
<dbReference type="NCBIfam" id="NF005722">
    <property type="entry name" value="PRK07539.1-2"/>
    <property type="match status" value="1"/>
</dbReference>
<dbReference type="NCBIfam" id="NF005725">
    <property type="entry name" value="PRK07539.1-5"/>
    <property type="match status" value="1"/>
</dbReference>
<dbReference type="PANTHER" id="PTHR10371:SF3">
    <property type="entry name" value="NADH DEHYDROGENASE [UBIQUINONE] FLAVOPROTEIN 2, MITOCHONDRIAL"/>
    <property type="match status" value="1"/>
</dbReference>
<dbReference type="PANTHER" id="PTHR10371">
    <property type="entry name" value="NADH DEHYDROGENASE UBIQUINONE FLAVOPROTEIN 2, MITOCHONDRIAL"/>
    <property type="match status" value="1"/>
</dbReference>
<dbReference type="Pfam" id="PF01257">
    <property type="entry name" value="2Fe-2S_thioredx"/>
    <property type="match status" value="1"/>
</dbReference>
<dbReference type="PIRSF" id="PIRSF000216">
    <property type="entry name" value="NADH_DH_24kDa"/>
    <property type="match status" value="1"/>
</dbReference>
<dbReference type="SUPFAM" id="SSF52833">
    <property type="entry name" value="Thioredoxin-like"/>
    <property type="match status" value="1"/>
</dbReference>
<dbReference type="PROSITE" id="PS01099">
    <property type="entry name" value="COMPLEX1_24K"/>
    <property type="match status" value="1"/>
</dbReference>
<name>NDUV2_MOUSE</name>
<accession>Q9D6J6</accession>
<accession>Q3U9L9</accession>
<accession>Q8BU07</accession>
<accession>Q8K2L0</accession>
<gene>
    <name evidence="8" type="primary">Ndufv2</name>
</gene>